<name>QUEC_METM6</name>
<accession>A9A873</accession>
<organism>
    <name type="scientific">Methanococcus maripaludis (strain C6 / ATCC BAA-1332)</name>
    <dbReference type="NCBI Taxonomy" id="444158"/>
    <lineage>
        <taxon>Archaea</taxon>
        <taxon>Methanobacteriati</taxon>
        <taxon>Methanobacteriota</taxon>
        <taxon>Methanomada group</taxon>
        <taxon>Methanococci</taxon>
        <taxon>Methanococcales</taxon>
        <taxon>Methanococcaceae</taxon>
        <taxon>Methanococcus</taxon>
    </lineage>
</organism>
<reference key="1">
    <citation type="submission" date="2007-10" db="EMBL/GenBank/DDBJ databases">
        <title>Complete sequence of Methanococcus maripaludis C6.</title>
        <authorList>
            <consortium name="US DOE Joint Genome Institute"/>
            <person name="Copeland A."/>
            <person name="Lucas S."/>
            <person name="Lapidus A."/>
            <person name="Barry K."/>
            <person name="Glavina del Rio T."/>
            <person name="Dalin E."/>
            <person name="Tice H."/>
            <person name="Pitluck S."/>
            <person name="Clum A."/>
            <person name="Schmutz J."/>
            <person name="Larimer F."/>
            <person name="Land M."/>
            <person name="Hauser L."/>
            <person name="Kyrpides N."/>
            <person name="Mikhailova N."/>
            <person name="Sieprawska-Lupa M."/>
            <person name="Whitman W.B."/>
            <person name="Richardson P."/>
        </authorList>
    </citation>
    <scope>NUCLEOTIDE SEQUENCE [LARGE SCALE GENOMIC DNA]</scope>
    <source>
        <strain>C6 / ATCC BAA-1332</strain>
    </source>
</reference>
<sequence>MKAICVLSGGLDSAVTSLVAKSENYDITTVTFNYGQMALNQEIKSAKKISEILNADNHVIDINFVKKFSKSGLNTGNIPEPEKEDLDDFEKSEKTMKAVWVPARNMIMFSIASGFAEGIDAEKIFSGLNKEEGVTFPDNTPEFIERFNKSLEYGTLNKVKMVAPLYKLNKPEIAKLGKELELKLDLEVIKYSYSCYRDNREDYLHCGTCESCMRRKRAFKEAGIVDPTKYLVE</sequence>
<keyword id="KW-0067">ATP-binding</keyword>
<keyword id="KW-0436">Ligase</keyword>
<keyword id="KW-0479">Metal-binding</keyword>
<keyword id="KW-0547">Nucleotide-binding</keyword>
<keyword id="KW-0862">Zinc</keyword>
<comment type="function">
    <text evidence="1">Catalyzes the ATP-dependent conversion of 7-carboxy-7-deazaguanine (CDG) to 7-cyano-7-deazaguanine (preQ(0)).</text>
</comment>
<comment type="catalytic activity">
    <reaction evidence="1">
        <text>7-carboxy-7-deazaguanine + NH4(+) + ATP = 7-cyano-7-deazaguanine + ADP + phosphate + H2O + H(+)</text>
        <dbReference type="Rhea" id="RHEA:27982"/>
        <dbReference type="ChEBI" id="CHEBI:15377"/>
        <dbReference type="ChEBI" id="CHEBI:15378"/>
        <dbReference type="ChEBI" id="CHEBI:28938"/>
        <dbReference type="ChEBI" id="CHEBI:30616"/>
        <dbReference type="ChEBI" id="CHEBI:43474"/>
        <dbReference type="ChEBI" id="CHEBI:45075"/>
        <dbReference type="ChEBI" id="CHEBI:61036"/>
        <dbReference type="ChEBI" id="CHEBI:456216"/>
        <dbReference type="EC" id="6.3.4.20"/>
    </reaction>
</comment>
<comment type="cofactor">
    <cofactor evidence="1">
        <name>Zn(2+)</name>
        <dbReference type="ChEBI" id="CHEBI:29105"/>
    </cofactor>
    <text evidence="1">Binds 1 zinc ion per subunit.</text>
</comment>
<comment type="pathway">
    <text evidence="1">Purine metabolism; 7-cyano-7-deazaguanine biosynthesis.</text>
</comment>
<comment type="similarity">
    <text evidence="1">Belongs to the QueC family.</text>
</comment>
<protein>
    <recommendedName>
        <fullName evidence="1">7-cyano-7-deazaguanine synthase</fullName>
        <ecNumber evidence="1">6.3.4.20</ecNumber>
    </recommendedName>
    <alternativeName>
        <fullName evidence="1">7-cyano-7-carbaguanine synthase</fullName>
    </alternativeName>
    <alternativeName>
        <fullName evidence="1">Archaeosine biosynthesis protein QueC</fullName>
    </alternativeName>
    <alternativeName>
        <fullName evidence="1">PreQ(0) synthase</fullName>
    </alternativeName>
</protein>
<evidence type="ECO:0000255" key="1">
    <source>
        <dbReference type="HAMAP-Rule" id="MF_01633"/>
    </source>
</evidence>
<gene>
    <name evidence="1" type="primary">queC</name>
    <name type="ordered locus">MmarC6_0729</name>
</gene>
<dbReference type="EC" id="6.3.4.20" evidence="1"/>
<dbReference type="EMBL" id="CP000867">
    <property type="protein sequence ID" value="ABX01546.1"/>
    <property type="molecule type" value="Genomic_DNA"/>
</dbReference>
<dbReference type="SMR" id="A9A873"/>
<dbReference type="STRING" id="444158.MmarC6_0729"/>
<dbReference type="KEGG" id="mmx:MmarC6_0729"/>
<dbReference type="eggNOG" id="arCOG00039">
    <property type="taxonomic scope" value="Archaea"/>
</dbReference>
<dbReference type="HOGENOM" id="CLU_081854_1_1_2"/>
<dbReference type="OrthoDB" id="6532at2157"/>
<dbReference type="PhylomeDB" id="A9A873"/>
<dbReference type="UniPathway" id="UPA00391"/>
<dbReference type="GO" id="GO:0005524">
    <property type="term" value="F:ATP binding"/>
    <property type="evidence" value="ECO:0007669"/>
    <property type="project" value="UniProtKB-UniRule"/>
</dbReference>
<dbReference type="GO" id="GO:0016879">
    <property type="term" value="F:ligase activity, forming carbon-nitrogen bonds"/>
    <property type="evidence" value="ECO:0007669"/>
    <property type="project" value="UniProtKB-UniRule"/>
</dbReference>
<dbReference type="GO" id="GO:0008270">
    <property type="term" value="F:zinc ion binding"/>
    <property type="evidence" value="ECO:0007669"/>
    <property type="project" value="UniProtKB-UniRule"/>
</dbReference>
<dbReference type="CDD" id="cd01995">
    <property type="entry name" value="QueC-like"/>
    <property type="match status" value="1"/>
</dbReference>
<dbReference type="Gene3D" id="3.40.50.620">
    <property type="entry name" value="HUPs"/>
    <property type="match status" value="1"/>
</dbReference>
<dbReference type="HAMAP" id="MF_01633">
    <property type="entry name" value="QueC"/>
    <property type="match status" value="1"/>
</dbReference>
<dbReference type="InterPro" id="IPR018317">
    <property type="entry name" value="QueC"/>
</dbReference>
<dbReference type="InterPro" id="IPR014729">
    <property type="entry name" value="Rossmann-like_a/b/a_fold"/>
</dbReference>
<dbReference type="NCBIfam" id="TIGR00364">
    <property type="entry name" value="7-cyano-7-deazaguanine synthase QueC"/>
    <property type="match status" value="1"/>
</dbReference>
<dbReference type="PANTHER" id="PTHR42914">
    <property type="entry name" value="7-CYANO-7-DEAZAGUANINE SYNTHASE"/>
    <property type="match status" value="1"/>
</dbReference>
<dbReference type="PANTHER" id="PTHR42914:SF1">
    <property type="entry name" value="7-CYANO-7-DEAZAGUANINE SYNTHASE"/>
    <property type="match status" value="1"/>
</dbReference>
<dbReference type="Pfam" id="PF06508">
    <property type="entry name" value="QueC"/>
    <property type="match status" value="1"/>
</dbReference>
<dbReference type="PIRSF" id="PIRSF006293">
    <property type="entry name" value="ExsB"/>
    <property type="match status" value="1"/>
</dbReference>
<dbReference type="SUPFAM" id="SSF52402">
    <property type="entry name" value="Adenine nucleotide alpha hydrolases-like"/>
    <property type="match status" value="1"/>
</dbReference>
<feature type="chain" id="PRO_1000186612" description="7-cyano-7-deazaguanine synthase">
    <location>
        <begin position="1"/>
        <end position="233"/>
    </location>
</feature>
<feature type="binding site" evidence="1">
    <location>
        <begin position="7"/>
        <end position="17"/>
    </location>
    <ligand>
        <name>ATP</name>
        <dbReference type="ChEBI" id="CHEBI:30616"/>
    </ligand>
</feature>
<feature type="binding site" evidence="1">
    <location>
        <position position="195"/>
    </location>
    <ligand>
        <name>Zn(2+)</name>
        <dbReference type="ChEBI" id="CHEBI:29105"/>
    </ligand>
</feature>
<feature type="binding site" evidence="1">
    <location>
        <position position="206"/>
    </location>
    <ligand>
        <name>Zn(2+)</name>
        <dbReference type="ChEBI" id="CHEBI:29105"/>
    </ligand>
</feature>
<feature type="binding site" evidence="1">
    <location>
        <position position="209"/>
    </location>
    <ligand>
        <name>Zn(2+)</name>
        <dbReference type="ChEBI" id="CHEBI:29105"/>
    </ligand>
</feature>
<feature type="binding site" evidence="1">
    <location>
        <position position="212"/>
    </location>
    <ligand>
        <name>Zn(2+)</name>
        <dbReference type="ChEBI" id="CHEBI:29105"/>
    </ligand>
</feature>
<proteinExistence type="inferred from homology"/>